<reference key="1">
    <citation type="journal article" date="2005" name="J. Androl.">
        <title>Novel development-related alternative splices in human testis identified by cDNA microarrays.</title>
        <authorList>
            <person name="Huang X."/>
            <person name="Li J."/>
            <person name="Lu L."/>
            <person name="Xu M."/>
            <person name="Xiao J."/>
            <person name="Yin L."/>
            <person name="Zhu H."/>
            <person name="Zhou Z."/>
            <person name="Sha J.H."/>
        </authorList>
    </citation>
    <scope>NUCLEOTIDE SEQUENCE [MRNA] (ISOFORMS 1 AND 2)</scope>
    <scope>TISSUE SPECIFICITY</scope>
    <source>
        <tissue>Testis</tissue>
    </source>
</reference>
<reference key="2">
    <citation type="journal article" date="2004" name="Nat. Genet.">
        <title>Complete sequencing and characterization of 21,243 full-length human cDNAs.</title>
        <authorList>
            <person name="Ota T."/>
            <person name="Suzuki Y."/>
            <person name="Nishikawa T."/>
            <person name="Otsuki T."/>
            <person name="Sugiyama T."/>
            <person name="Irie R."/>
            <person name="Wakamatsu A."/>
            <person name="Hayashi K."/>
            <person name="Sato H."/>
            <person name="Nagai K."/>
            <person name="Kimura K."/>
            <person name="Makita H."/>
            <person name="Sekine M."/>
            <person name="Obayashi M."/>
            <person name="Nishi T."/>
            <person name="Shibahara T."/>
            <person name="Tanaka T."/>
            <person name="Ishii S."/>
            <person name="Yamamoto J."/>
            <person name="Saito K."/>
            <person name="Kawai Y."/>
            <person name="Isono Y."/>
            <person name="Nakamura Y."/>
            <person name="Nagahari K."/>
            <person name="Murakami K."/>
            <person name="Yasuda T."/>
            <person name="Iwayanagi T."/>
            <person name="Wagatsuma M."/>
            <person name="Shiratori A."/>
            <person name="Sudo H."/>
            <person name="Hosoiri T."/>
            <person name="Kaku Y."/>
            <person name="Kodaira H."/>
            <person name="Kondo H."/>
            <person name="Sugawara M."/>
            <person name="Takahashi M."/>
            <person name="Kanda K."/>
            <person name="Yokoi T."/>
            <person name="Furuya T."/>
            <person name="Kikkawa E."/>
            <person name="Omura Y."/>
            <person name="Abe K."/>
            <person name="Kamihara K."/>
            <person name="Katsuta N."/>
            <person name="Sato K."/>
            <person name="Tanikawa M."/>
            <person name="Yamazaki M."/>
            <person name="Ninomiya K."/>
            <person name="Ishibashi T."/>
            <person name="Yamashita H."/>
            <person name="Murakawa K."/>
            <person name="Fujimori K."/>
            <person name="Tanai H."/>
            <person name="Kimata M."/>
            <person name="Watanabe M."/>
            <person name="Hiraoka S."/>
            <person name="Chiba Y."/>
            <person name="Ishida S."/>
            <person name="Ono Y."/>
            <person name="Takiguchi S."/>
            <person name="Watanabe S."/>
            <person name="Yosida M."/>
            <person name="Hotuta T."/>
            <person name="Kusano J."/>
            <person name="Kanehori K."/>
            <person name="Takahashi-Fujii A."/>
            <person name="Hara H."/>
            <person name="Tanase T.-O."/>
            <person name="Nomura Y."/>
            <person name="Togiya S."/>
            <person name="Komai F."/>
            <person name="Hara R."/>
            <person name="Takeuchi K."/>
            <person name="Arita M."/>
            <person name="Imose N."/>
            <person name="Musashino K."/>
            <person name="Yuuki H."/>
            <person name="Oshima A."/>
            <person name="Sasaki N."/>
            <person name="Aotsuka S."/>
            <person name="Yoshikawa Y."/>
            <person name="Matsunawa H."/>
            <person name="Ichihara T."/>
            <person name="Shiohata N."/>
            <person name="Sano S."/>
            <person name="Moriya S."/>
            <person name="Momiyama H."/>
            <person name="Satoh N."/>
            <person name="Takami S."/>
            <person name="Terashima Y."/>
            <person name="Suzuki O."/>
            <person name="Nakagawa S."/>
            <person name="Senoh A."/>
            <person name="Mizoguchi H."/>
            <person name="Goto Y."/>
            <person name="Shimizu F."/>
            <person name="Wakebe H."/>
            <person name="Hishigaki H."/>
            <person name="Watanabe T."/>
            <person name="Sugiyama A."/>
            <person name="Takemoto M."/>
            <person name="Kawakami B."/>
            <person name="Yamazaki M."/>
            <person name="Watanabe K."/>
            <person name="Kumagai A."/>
            <person name="Itakura S."/>
            <person name="Fukuzumi Y."/>
            <person name="Fujimori Y."/>
            <person name="Komiyama M."/>
            <person name="Tashiro H."/>
            <person name="Tanigami A."/>
            <person name="Fujiwara T."/>
            <person name="Ono T."/>
            <person name="Yamada K."/>
            <person name="Fujii Y."/>
            <person name="Ozaki K."/>
            <person name="Hirao M."/>
            <person name="Ohmori Y."/>
            <person name="Kawabata A."/>
            <person name="Hikiji T."/>
            <person name="Kobatake N."/>
            <person name="Inagaki H."/>
            <person name="Ikema Y."/>
            <person name="Okamoto S."/>
            <person name="Okitani R."/>
            <person name="Kawakami T."/>
            <person name="Noguchi S."/>
            <person name="Itoh T."/>
            <person name="Shigeta K."/>
            <person name="Senba T."/>
            <person name="Matsumura K."/>
            <person name="Nakajima Y."/>
            <person name="Mizuno T."/>
            <person name="Morinaga M."/>
            <person name="Sasaki M."/>
            <person name="Togashi T."/>
            <person name="Oyama M."/>
            <person name="Hata H."/>
            <person name="Watanabe M."/>
            <person name="Komatsu T."/>
            <person name="Mizushima-Sugano J."/>
            <person name="Satoh T."/>
            <person name="Shirai Y."/>
            <person name="Takahashi Y."/>
            <person name="Nakagawa K."/>
            <person name="Okumura K."/>
            <person name="Nagase T."/>
            <person name="Nomura N."/>
            <person name="Kikuchi H."/>
            <person name="Masuho Y."/>
            <person name="Yamashita R."/>
            <person name="Nakai K."/>
            <person name="Yada T."/>
            <person name="Nakamura Y."/>
            <person name="Ohara O."/>
            <person name="Isogai T."/>
            <person name="Sugano S."/>
        </authorList>
    </citation>
    <scope>NUCLEOTIDE SEQUENCE [LARGE SCALE MRNA] (ISOFORM 3)</scope>
    <source>
        <tissue>Testis</tissue>
    </source>
</reference>
<reference key="3">
    <citation type="journal article" date="2006" name="Nature">
        <title>DNA sequence of human chromosome 17 and analysis of rearrangement in the human lineage.</title>
        <authorList>
            <person name="Zody M.C."/>
            <person name="Garber M."/>
            <person name="Adams D.J."/>
            <person name="Sharpe T."/>
            <person name="Harrow J."/>
            <person name="Lupski J.R."/>
            <person name="Nicholson C."/>
            <person name="Searle S.M."/>
            <person name="Wilming L."/>
            <person name="Young S.K."/>
            <person name="Abouelleil A."/>
            <person name="Allen N.R."/>
            <person name="Bi W."/>
            <person name="Bloom T."/>
            <person name="Borowsky M.L."/>
            <person name="Bugalter B.E."/>
            <person name="Butler J."/>
            <person name="Chang J.L."/>
            <person name="Chen C.-K."/>
            <person name="Cook A."/>
            <person name="Corum B."/>
            <person name="Cuomo C.A."/>
            <person name="de Jong P.J."/>
            <person name="DeCaprio D."/>
            <person name="Dewar K."/>
            <person name="FitzGerald M."/>
            <person name="Gilbert J."/>
            <person name="Gibson R."/>
            <person name="Gnerre S."/>
            <person name="Goldstein S."/>
            <person name="Grafham D.V."/>
            <person name="Grocock R."/>
            <person name="Hafez N."/>
            <person name="Hagopian D.S."/>
            <person name="Hart E."/>
            <person name="Norman C.H."/>
            <person name="Humphray S."/>
            <person name="Jaffe D.B."/>
            <person name="Jones M."/>
            <person name="Kamal M."/>
            <person name="Khodiyar V.K."/>
            <person name="LaButti K."/>
            <person name="Laird G."/>
            <person name="Lehoczky J."/>
            <person name="Liu X."/>
            <person name="Lokyitsang T."/>
            <person name="Loveland J."/>
            <person name="Lui A."/>
            <person name="Macdonald P."/>
            <person name="Major J.E."/>
            <person name="Matthews L."/>
            <person name="Mauceli E."/>
            <person name="McCarroll S.A."/>
            <person name="Mihalev A.H."/>
            <person name="Mudge J."/>
            <person name="Nguyen C."/>
            <person name="Nicol R."/>
            <person name="O'Leary S.B."/>
            <person name="Osoegawa K."/>
            <person name="Schwartz D.C."/>
            <person name="Shaw-Smith C."/>
            <person name="Stankiewicz P."/>
            <person name="Steward C."/>
            <person name="Swarbreck D."/>
            <person name="Venkataraman V."/>
            <person name="Whittaker C.A."/>
            <person name="Yang X."/>
            <person name="Zimmer A.R."/>
            <person name="Bradley A."/>
            <person name="Hubbard T."/>
            <person name="Birren B.W."/>
            <person name="Rogers J."/>
            <person name="Lander E.S."/>
            <person name="Nusbaum C."/>
        </authorList>
    </citation>
    <scope>NUCLEOTIDE SEQUENCE [LARGE SCALE GENOMIC DNA]</scope>
</reference>
<reference key="4">
    <citation type="submission" date="2005-09" db="EMBL/GenBank/DDBJ databases">
        <authorList>
            <person name="Mural R.J."/>
            <person name="Istrail S."/>
            <person name="Sutton G.G."/>
            <person name="Florea L."/>
            <person name="Halpern A.L."/>
            <person name="Mobarry C.M."/>
            <person name="Lippert R."/>
            <person name="Walenz B."/>
            <person name="Shatkay H."/>
            <person name="Dew I."/>
            <person name="Miller J.R."/>
            <person name="Flanigan M.J."/>
            <person name="Edwards N.J."/>
            <person name="Bolanos R."/>
            <person name="Fasulo D."/>
            <person name="Halldorsson B.V."/>
            <person name="Hannenhalli S."/>
            <person name="Turner R."/>
            <person name="Yooseph S."/>
            <person name="Lu F."/>
            <person name="Nusskern D.R."/>
            <person name="Shue B.C."/>
            <person name="Zheng X.H."/>
            <person name="Zhong F."/>
            <person name="Delcher A.L."/>
            <person name="Huson D.H."/>
            <person name="Kravitz S.A."/>
            <person name="Mouchard L."/>
            <person name="Reinert K."/>
            <person name="Remington K.A."/>
            <person name="Clark A.G."/>
            <person name="Waterman M.S."/>
            <person name="Eichler E.E."/>
            <person name="Adams M.D."/>
            <person name="Hunkapiller M.W."/>
            <person name="Myers E.W."/>
            <person name="Venter J.C."/>
        </authorList>
    </citation>
    <scope>NUCLEOTIDE SEQUENCE [LARGE SCALE GENOMIC DNA]</scope>
</reference>
<reference key="5">
    <citation type="journal article" date="2004" name="Genome Res.">
        <title>The status, quality, and expansion of the NIH full-length cDNA project: the Mammalian Gene Collection (MGC).</title>
        <authorList>
            <consortium name="The MGC Project Team"/>
        </authorList>
    </citation>
    <scope>NUCLEOTIDE SEQUENCE [LARGE SCALE MRNA] (ISOFORM 1)</scope>
    <scope>VARIANTS MET-148 AND THR-160</scope>
    <source>
        <tissue>Testis</tissue>
    </source>
</reference>
<reference key="6">
    <citation type="journal article" date="2021" name="Hum. Reprod.">
        <title>Whole-exome sequencing of consanguineous families with infertile men and women identifies homologous mutations in SPATA22 and MEIOB.</title>
        <authorList>
            <person name="Wu Y."/>
            <person name="Li Y."/>
            <person name="Murtaza G."/>
            <person name="Zhou J."/>
            <person name="Jiao Y."/>
            <person name="Gong C."/>
            <person name="Hu C."/>
            <person name="Han Q."/>
            <person name="Zhang H."/>
            <person name="Zhang Y."/>
            <person name="Shi B."/>
            <person name="Ma H."/>
            <person name="Jiang X."/>
            <person name="Shi Q."/>
        </authorList>
    </citation>
    <scope>INVOLVEMENT IN SPGF96</scope>
    <scope>INTERACTION WITH MEIOB</scope>
</reference>
<reference key="7">
    <citation type="journal article" date="2022" name="Clin. Genet.">
        <title>Bi-allelic SPATA22 variants cause premature ovarian insufficiency and nonobstructive azoospermia due to meiotic arrest.</title>
        <authorList>
            <person name="Yao C."/>
            <person name="Hou D."/>
            <person name="Ji Z."/>
            <person name="Pang D."/>
            <person name="Li P."/>
            <person name="Tian R."/>
            <person name="Zhang Y."/>
            <person name="Ou N."/>
            <person name="Bai H."/>
            <person name="Zhi E."/>
            <person name="Huang Y."/>
            <person name="Qin Y."/>
            <person name="Zhao J."/>
            <person name="Wang C."/>
            <person name="Zhou Z."/>
            <person name="Guo T."/>
            <person name="Li Z."/>
        </authorList>
    </citation>
    <scope>VARIANTS POF25 11-ARG--THR-363 DEL AND 134-ARG--THR-363 DEL</scope>
    <scope>VARIANT SPGF96 134-ARG--THR-363 DEL</scope>
    <scope>INVOLVEMENT IN SPGF96</scope>
    <scope>INVOLVEMENT IN POF25</scope>
</reference>
<feature type="chain" id="PRO_0000251605" description="Spermatogenesis-associated protein 22">
    <location>
        <begin position="1"/>
        <end position="363"/>
    </location>
</feature>
<feature type="region of interest" description="Disordered" evidence="2">
    <location>
        <begin position="1"/>
        <end position="51"/>
    </location>
</feature>
<feature type="region of interest" description="Disordered" evidence="2">
    <location>
        <begin position="98"/>
        <end position="127"/>
    </location>
</feature>
<feature type="region of interest" description="Disordered" evidence="2">
    <location>
        <begin position="140"/>
        <end position="170"/>
    </location>
</feature>
<feature type="compositionally biased region" description="Polar residues" evidence="2">
    <location>
        <begin position="1"/>
        <end position="12"/>
    </location>
</feature>
<feature type="compositionally biased region" description="Polar residues" evidence="2">
    <location>
        <begin position="30"/>
        <end position="48"/>
    </location>
</feature>
<feature type="compositionally biased region" description="Polar residues" evidence="2">
    <location>
        <begin position="98"/>
        <end position="108"/>
    </location>
</feature>
<feature type="compositionally biased region" description="Polar residues" evidence="2">
    <location>
        <begin position="140"/>
        <end position="157"/>
    </location>
</feature>
<feature type="splice variant" id="VSP_020763" description="In isoform 2." evidence="8">
    <location>
        <begin position="15"/>
        <end position="57"/>
    </location>
</feature>
<feature type="splice variant" id="VSP_044858" description="In isoform 3." evidence="7">
    <original>AVLDSAVTPGPYYSKTFLMRDGKNTLPCVFYEIDRELPRLIRGRVHRCVGNYDQKKNIFQCVSVRPASVSEQKTFQAFVKIADVEMQYYINVMNET</original>
    <variation>GS</variation>
    <location>
        <begin position="268"/>
        <end position="363"/>
    </location>
</feature>
<feature type="sequence variant" id="VAR_090150" description="In POF25; likely pathogenic." evidence="6">
    <location>
        <begin position="11"/>
        <end position="363"/>
    </location>
</feature>
<feature type="sequence variant" id="VAR_027693" description="In dbSNP:rs2291604.">
    <original>R</original>
    <variation>T</variation>
    <location>
        <position position="112"/>
    </location>
</feature>
<feature type="sequence variant" id="VAR_090151" description="In POF25 and SPGF96; likely pathogenic." evidence="6">
    <location>
        <begin position="134"/>
        <end position="363"/>
    </location>
</feature>
<feature type="sequence variant" id="VAR_027694" description="In dbSNP:rs1488690." evidence="3">
    <original>V</original>
    <variation>M</variation>
    <location>
        <position position="148"/>
    </location>
</feature>
<feature type="sequence variant" id="VAR_027695" description="In dbSNP:rs11556563.">
    <original>Q</original>
    <variation>R</variation>
    <location>
        <position position="155"/>
    </location>
</feature>
<feature type="sequence variant" id="VAR_027696" description="In dbSNP:rs1488689." evidence="3">
    <original>I</original>
    <variation>T</variation>
    <location>
        <position position="160"/>
    </location>
</feature>
<feature type="sequence conflict" description="In Ref. 1; AAK51120/AAK53408/AAK61373/AAK61374." evidence="9" ref="1">
    <original>N</original>
    <variation>S</variation>
    <location>
        <position position="6"/>
    </location>
</feature>
<feature type="sequence conflict" description="In Ref. 1; AAK53408/AAK61373/AAK61374." evidence="9" ref="1">
    <original>V</original>
    <variation>A</variation>
    <location>
        <position position="84"/>
    </location>
</feature>
<feature type="sequence conflict" description="In Ref. 2; BAG63323." evidence="9" ref="2">
    <original>Q</original>
    <variation>R</variation>
    <location>
        <position position="106"/>
    </location>
</feature>
<keyword id="KW-0025">Alternative splicing</keyword>
<keyword id="KW-0158">Chromosome</keyword>
<keyword id="KW-0225">Disease variant</keyword>
<keyword id="KW-0469">Meiosis</keyword>
<keyword id="KW-1066">Premature ovarian failure</keyword>
<keyword id="KW-1267">Proteomics identification</keyword>
<keyword id="KW-1185">Reference proteome</keyword>
<proteinExistence type="evidence at protein level"/>
<gene>
    <name evidence="10" type="primary">SPATA22</name>
</gene>
<accession>Q8NHS9</accession>
<accession>B4DXB1</accession>
<accession>D3DTI9</accession>
<accession>J3KN63</accession>
<accession>Q969H3</accession>
<accession>Q96JT4</accession>
<evidence type="ECO:0000250" key="1">
    <source>
        <dbReference type="UniProtKB" id="Q5SV06"/>
    </source>
</evidence>
<evidence type="ECO:0000256" key="2">
    <source>
        <dbReference type="SAM" id="MobiDB-lite"/>
    </source>
</evidence>
<evidence type="ECO:0000269" key="3">
    <source>
    </source>
</evidence>
<evidence type="ECO:0000269" key="4">
    <source>
    </source>
</evidence>
<evidence type="ECO:0000269" key="5">
    <source>
    </source>
</evidence>
<evidence type="ECO:0000269" key="6">
    <source>
    </source>
</evidence>
<evidence type="ECO:0000303" key="7">
    <source>
    </source>
</evidence>
<evidence type="ECO:0000303" key="8">
    <source>
    </source>
</evidence>
<evidence type="ECO:0000305" key="9"/>
<evidence type="ECO:0000312" key="10">
    <source>
        <dbReference type="HGNC" id="HGNC:30705"/>
    </source>
</evidence>
<comment type="function">
    <text evidence="1">Meiosis-specific protein required for homologous recombination in meiosis I.</text>
</comment>
<comment type="subunit">
    <text evidence="1 5">Component of a multiprotein complex with MEIOB and RPA2. Interacts with MEIOB (PubMed:34392356). Interacts with the complex BRME1:HSF2BP:BRCA2.</text>
</comment>
<comment type="interaction">
    <interactant intactId="EBI-7067260">
        <id>Q8NHS9</id>
    </interactant>
    <interactant intactId="EBI-702390">
        <id>Q9UBB4</id>
        <label>ATXN10</label>
    </interactant>
    <organismsDiffer>false</organismsDiffer>
    <experiments>3</experiments>
</comment>
<comment type="interaction">
    <interactant intactId="EBI-7067260">
        <id>Q8NHS9</id>
    </interactant>
    <interactant intactId="EBI-1053164">
        <id>O75190</id>
        <label>DNAJB6</label>
    </interactant>
    <organismsDiffer>false</organismsDiffer>
    <experiments>3</experiments>
</comment>
<comment type="interaction">
    <interactant intactId="EBI-7067260">
        <id>Q8NHS9</id>
    </interactant>
    <interactant intactId="EBI-750300">
        <id>Q01658</id>
        <label>DR1</label>
    </interactant>
    <organismsDiffer>false</organismsDiffer>
    <experiments>3</experiments>
</comment>
<comment type="interaction">
    <interactant intactId="EBI-7067260">
        <id>Q8NHS9</id>
    </interactant>
    <interactant intactId="EBI-400434">
        <id>P35637</id>
        <label>FUS</label>
    </interactant>
    <organismsDiffer>false</organismsDiffer>
    <experiments>3</experiments>
</comment>
<comment type="interaction">
    <interactant intactId="EBI-7067260">
        <id>Q8NHS9</id>
    </interactant>
    <interactant intactId="EBI-744302">
        <id>P14136</id>
        <label>GFAP</label>
    </interactant>
    <organismsDiffer>false</organismsDiffer>
    <experiments>3</experiments>
</comment>
<comment type="interaction">
    <interactant intactId="EBI-7067260">
        <id>Q8NHS9</id>
    </interactant>
    <interactant intactId="EBI-618309">
        <id>Q08379</id>
        <label>GOLGA2</label>
    </interactant>
    <organismsDiffer>false</organismsDiffer>
    <experiments>3</experiments>
</comment>
<comment type="interaction">
    <interactant intactId="EBI-7067260">
        <id>Q8NHS9</id>
    </interactant>
    <interactant intactId="EBI-389564">
        <id>Q00403</id>
        <label>GTF2B</label>
    </interactant>
    <organismsDiffer>false</organismsDiffer>
    <experiments>3</experiments>
</comment>
<comment type="interaction">
    <interactant intactId="EBI-7067260">
        <id>Q8NHS9</id>
    </interactant>
    <interactant intactId="EBI-1054873">
        <id>Q9Y5Q9</id>
        <label>GTF3C3</label>
    </interactant>
    <organismsDiffer>false</organismsDiffer>
    <experiments>3</experiments>
</comment>
<comment type="interaction">
    <interactant intactId="EBI-7067260">
        <id>Q8NHS9</id>
    </interactant>
    <interactant intactId="EBI-7116203">
        <id>O75031</id>
        <label>HSF2BP</label>
    </interactant>
    <organismsDiffer>false</organismsDiffer>
    <experiments>6</experiments>
</comment>
<comment type="interaction">
    <interactant intactId="EBI-7067260">
        <id>Q8NHS9</id>
    </interactant>
    <interactant intactId="EBI-466029">
        <id>P42858</id>
        <label>HTT</label>
    </interactant>
    <organismsDiffer>false</organismsDiffer>
    <experiments>9</experiments>
</comment>
<comment type="interaction">
    <interactant intactId="EBI-7067260">
        <id>Q8NHS9</id>
    </interactant>
    <interactant intactId="EBI-1055254">
        <id>Q8WXH2</id>
        <label>JPH3</label>
    </interactant>
    <organismsDiffer>false</organismsDiffer>
    <experiments>3</experiments>
</comment>
<comment type="interaction">
    <interactant intactId="EBI-7067260">
        <id>Q8NHS9</id>
    </interactant>
    <interactant intactId="EBI-5323863">
        <id>Q5S007</id>
        <label>LRRK2</label>
    </interactant>
    <organismsDiffer>false</organismsDiffer>
    <experiments>3</experiments>
</comment>
<comment type="interaction">
    <interactant intactId="EBI-7067260">
        <id>Q8NHS9</id>
    </interactant>
    <interactant intactId="EBI-713665">
        <id>P19404</id>
        <label>NDUFV2</label>
    </interactant>
    <organismsDiffer>false</organismsDiffer>
    <experiments>3</experiments>
</comment>
<comment type="interaction">
    <interactant intactId="EBI-7067260">
        <id>Q8NHS9</id>
    </interactant>
    <interactant intactId="EBI-1014514">
        <id>P35240-4</id>
        <label>NF2</label>
    </interactant>
    <organismsDiffer>false</organismsDiffer>
    <experiments>3</experiments>
</comment>
<comment type="interaction">
    <interactant intactId="EBI-7067260">
        <id>Q8NHS9</id>
    </interactant>
    <interactant intactId="EBI-50433196">
        <id>A0A6Q8PF08</id>
        <label>PMP22</label>
    </interactant>
    <organismsDiffer>false</organismsDiffer>
    <experiments>3</experiments>
</comment>
<comment type="interaction">
    <interactant intactId="EBI-7067260">
        <id>Q8NHS9</id>
    </interactant>
    <interactant intactId="EBI-985879">
        <id>P37840</id>
        <label>SNCA</label>
    </interactant>
    <organismsDiffer>false</organismsDiffer>
    <experiments>3</experiments>
</comment>
<comment type="interaction">
    <interactant intactId="EBI-7067260">
        <id>Q8NHS9</id>
    </interactant>
    <interactant intactId="EBI-990792">
        <id>P00441</id>
        <label>SOD1</label>
    </interactant>
    <organismsDiffer>false</organismsDiffer>
    <experiments>3</experiments>
</comment>
<comment type="interaction">
    <interactant intactId="EBI-7067260">
        <id>Q8NHS9</id>
    </interactant>
    <interactant intactId="EBI-25912847">
        <id>Q6NUL7</id>
        <label>SPTLC1</label>
    </interactant>
    <organismsDiffer>false</organismsDiffer>
    <experiments>3</experiments>
</comment>
<comment type="interaction">
    <interactant intactId="EBI-7067260">
        <id>Q8NHS9</id>
    </interactant>
    <interactant intactId="EBI-372899">
        <id>Q13148</id>
        <label>TARDBP</label>
    </interactant>
    <organismsDiffer>false</organismsDiffer>
    <experiments>6</experiments>
</comment>
<comment type="subcellular location">
    <subcellularLocation>
        <location evidence="1">Chromosome</location>
    </subcellularLocation>
    <text evidence="1">Localizes on meiotic chromosome axes. Accumulates on resected DNA. Localization is dependent on MEIOB.</text>
</comment>
<comment type="alternative products">
    <event type="alternative splicing"/>
    <isoform>
        <id>Q8NHS9-1</id>
        <name>1</name>
        <name>NYD-SP20C</name>
        <name>NYD-SP20D</name>
        <sequence type="displayed"/>
    </isoform>
    <isoform>
        <id>Q8NHS9-2</id>
        <name>2</name>
        <name>NYD-SP20B</name>
        <sequence type="described" ref="VSP_020763"/>
    </isoform>
    <isoform>
        <id>Q8NHS9-3</id>
        <name>3</name>
        <sequence type="described" ref="VSP_044858"/>
    </isoform>
</comment>
<comment type="tissue specificity">
    <text evidence="4">Highly expressed in adult testis.</text>
</comment>
<comment type="disease" evidence="5 6">
    <disease id="DI-06970">
        <name>Spermatogenic failure 96</name>
        <acronym>SPGF96</acronym>
        <description>An autosomal recessive, male infertility disorder characterized by non-obstructive azoospermia due to spermatogenesis arrest at the zygotene stage.</description>
        <dbReference type="MIM" id="621001"/>
    </disease>
    <text>The disease is caused by variants affecting the gene represented in this entry.</text>
</comment>
<comment type="disease" evidence="6">
    <disease id="DI-06971">
        <name>Premature ovarian failure 25</name>
        <acronym>POF25</acronym>
        <description>A form of premature ovarian failure, an ovarian disorder defined as the cessation of ovarian function under the age of 40 years. It is characterized by oligomenorrhea or amenorrhea, in the presence of elevated levels of serum gonadotropins and low estradiol. POF25 inheritance is autosomal recessive.</description>
        <dbReference type="MIM" id="621002"/>
    </disease>
    <text>The disease is caused by variants affecting the gene represented in this entry.</text>
</comment>
<dbReference type="EMBL" id="AF367472">
    <property type="protein sequence ID" value="AAK53408.1"/>
    <property type="molecule type" value="mRNA"/>
</dbReference>
<dbReference type="EMBL" id="AY032684">
    <property type="protein sequence ID" value="AAK51120.1"/>
    <property type="molecule type" value="mRNA"/>
</dbReference>
<dbReference type="EMBL" id="AY035867">
    <property type="protein sequence ID" value="AAK61373.1"/>
    <property type="molecule type" value="mRNA"/>
</dbReference>
<dbReference type="EMBL" id="AY035868">
    <property type="protein sequence ID" value="AAK61374.1"/>
    <property type="molecule type" value="mRNA"/>
</dbReference>
<dbReference type="EMBL" id="AK301892">
    <property type="protein sequence ID" value="BAG63323.1"/>
    <property type="molecule type" value="mRNA"/>
</dbReference>
<dbReference type="EMBL" id="AC025125">
    <property type="status" value="NOT_ANNOTATED_CDS"/>
    <property type="molecule type" value="Genomic_DNA"/>
</dbReference>
<dbReference type="EMBL" id="CH471108">
    <property type="protein sequence ID" value="EAW90508.1"/>
    <property type="molecule type" value="Genomic_DNA"/>
</dbReference>
<dbReference type="EMBL" id="CH471108">
    <property type="protein sequence ID" value="EAW90509.1"/>
    <property type="molecule type" value="Genomic_DNA"/>
</dbReference>
<dbReference type="EMBL" id="CH471108">
    <property type="protein sequence ID" value="EAW90510.1"/>
    <property type="molecule type" value="Genomic_DNA"/>
</dbReference>
<dbReference type="EMBL" id="CH471108">
    <property type="protein sequence ID" value="EAW90511.1"/>
    <property type="molecule type" value="Genomic_DNA"/>
</dbReference>
<dbReference type="EMBL" id="BC029483">
    <property type="protein sequence ID" value="AAH29483.1"/>
    <property type="molecule type" value="mRNA"/>
</dbReference>
<dbReference type="CCDS" id="CCDS11027.1">
    <molecule id="Q8NHS9-1"/>
</dbReference>
<dbReference type="CCDS" id="CCDS54066.1">
    <molecule id="Q8NHS9-2"/>
</dbReference>
<dbReference type="CCDS" id="CCDS54067.1">
    <molecule id="Q8NHS9-3"/>
</dbReference>
<dbReference type="RefSeq" id="NP_001164166.1">
    <molecule id="Q8NHS9-1"/>
    <property type="nucleotide sequence ID" value="NM_001170695.2"/>
</dbReference>
<dbReference type="RefSeq" id="NP_001164167.1">
    <molecule id="Q8NHS9-2"/>
    <property type="nucleotide sequence ID" value="NM_001170696.2"/>
</dbReference>
<dbReference type="RefSeq" id="NP_001164168.1">
    <molecule id="Q8NHS9-1"/>
    <property type="nucleotide sequence ID" value="NM_001170697.2"/>
</dbReference>
<dbReference type="RefSeq" id="NP_001164169.1">
    <molecule id="Q8NHS9-1"/>
    <property type="nucleotide sequence ID" value="NM_001170698.2"/>
</dbReference>
<dbReference type="RefSeq" id="NP_001164170.1">
    <molecule id="Q8NHS9-3"/>
    <property type="nucleotide sequence ID" value="NM_001170699.2"/>
</dbReference>
<dbReference type="RefSeq" id="NP_001308265.1">
    <property type="nucleotide sequence ID" value="NM_001321336.1"/>
</dbReference>
<dbReference type="RefSeq" id="NP_001308266.1">
    <molecule id="Q8NHS9-1"/>
    <property type="nucleotide sequence ID" value="NM_001321337.2"/>
</dbReference>
<dbReference type="RefSeq" id="NP_115987.2">
    <molecule id="Q8NHS9-1"/>
    <property type="nucleotide sequence ID" value="NM_032598.5"/>
</dbReference>
<dbReference type="BioGRID" id="124205">
    <property type="interactions" value="14"/>
</dbReference>
<dbReference type="FunCoup" id="Q8NHS9">
    <property type="interactions" value="48"/>
</dbReference>
<dbReference type="IntAct" id="Q8NHS9">
    <property type="interactions" value="29"/>
</dbReference>
<dbReference type="MINT" id="Q8NHS9"/>
<dbReference type="STRING" id="9606.ENSP00000459580"/>
<dbReference type="GlyGen" id="Q8NHS9">
    <property type="glycosylation" value="1 site"/>
</dbReference>
<dbReference type="iPTMnet" id="Q8NHS9"/>
<dbReference type="PhosphoSitePlus" id="Q8NHS9"/>
<dbReference type="BioMuta" id="SPATA22"/>
<dbReference type="DMDM" id="296452914"/>
<dbReference type="MassIVE" id="Q8NHS9"/>
<dbReference type="PaxDb" id="9606-ENSP00000459580"/>
<dbReference type="PeptideAtlas" id="Q8NHS9"/>
<dbReference type="ProteomicsDB" id="73750">
    <molecule id="Q8NHS9-1"/>
</dbReference>
<dbReference type="ProteomicsDB" id="73751">
    <molecule id="Q8NHS9-2"/>
</dbReference>
<dbReference type="Antibodypedia" id="42583">
    <property type="antibodies" value="99 antibodies from 20 providers"/>
</dbReference>
<dbReference type="DNASU" id="84690"/>
<dbReference type="Ensembl" id="ENST00000268981.9">
    <molecule id="Q8NHS9-3"/>
    <property type="protein sequence ID" value="ENSP00000268981.5"/>
    <property type="gene ID" value="ENSG00000141255.13"/>
</dbReference>
<dbReference type="Ensembl" id="ENST00000355380.8">
    <molecule id="Q8NHS9-2"/>
    <property type="protein sequence ID" value="ENSP00000347541.4"/>
    <property type="gene ID" value="ENSG00000141255.13"/>
</dbReference>
<dbReference type="Ensembl" id="ENST00000397168.7">
    <molecule id="Q8NHS9-1"/>
    <property type="protein sequence ID" value="ENSP00000380354.3"/>
    <property type="gene ID" value="ENSG00000141255.13"/>
</dbReference>
<dbReference type="Ensembl" id="ENST00000572969.6">
    <molecule id="Q8NHS9-1"/>
    <property type="protein sequence ID" value="ENSP00000460187.1"/>
    <property type="gene ID" value="ENSG00000141255.13"/>
</dbReference>
<dbReference type="Ensembl" id="ENST00000573128.5">
    <molecule id="Q8NHS9-1"/>
    <property type="protein sequence ID" value="ENSP00000459580.1"/>
    <property type="gene ID" value="ENSG00000141255.13"/>
</dbReference>
<dbReference type="Ensembl" id="ENST00000575375.5">
    <molecule id="Q8NHS9-1"/>
    <property type="protein sequence ID" value="ENSP00000459329.1"/>
    <property type="gene ID" value="ENSG00000141255.13"/>
</dbReference>
<dbReference type="GeneID" id="84690"/>
<dbReference type="KEGG" id="hsa:84690"/>
<dbReference type="MANE-Select" id="ENST00000572969.6">
    <property type="protein sequence ID" value="ENSP00000460187.1"/>
    <property type="RefSeq nucleotide sequence ID" value="NM_001170698.2"/>
    <property type="RefSeq protein sequence ID" value="NP_001164169.1"/>
</dbReference>
<dbReference type="UCSC" id="uc002fvm.5">
    <molecule id="Q8NHS9-1"/>
    <property type="organism name" value="human"/>
</dbReference>
<dbReference type="AGR" id="HGNC:30705"/>
<dbReference type="CTD" id="84690"/>
<dbReference type="DisGeNET" id="84690"/>
<dbReference type="GeneCards" id="SPATA22"/>
<dbReference type="HGNC" id="HGNC:30705">
    <property type="gene designation" value="SPATA22"/>
</dbReference>
<dbReference type="HPA" id="ENSG00000141255">
    <property type="expression patterns" value="Tissue enriched (testis)"/>
</dbReference>
<dbReference type="MalaCards" id="SPATA22"/>
<dbReference type="MIM" id="617673">
    <property type="type" value="gene"/>
</dbReference>
<dbReference type="MIM" id="621001">
    <property type="type" value="phenotype"/>
</dbReference>
<dbReference type="MIM" id="621002">
    <property type="type" value="phenotype"/>
</dbReference>
<dbReference type="neXtProt" id="NX_Q8NHS9"/>
<dbReference type="OpenTargets" id="ENSG00000141255"/>
<dbReference type="PharmGKB" id="PA142670887"/>
<dbReference type="VEuPathDB" id="HostDB:ENSG00000141255"/>
<dbReference type="eggNOG" id="ENOG502RNNP">
    <property type="taxonomic scope" value="Eukaryota"/>
</dbReference>
<dbReference type="GeneTree" id="ENSGT00390000018151"/>
<dbReference type="HOGENOM" id="CLU_050539_1_0_1"/>
<dbReference type="InParanoid" id="Q8NHS9"/>
<dbReference type="OMA" id="QDHSPAY"/>
<dbReference type="OrthoDB" id="10028206at2759"/>
<dbReference type="PAN-GO" id="Q8NHS9">
    <property type="GO annotations" value="1 GO annotation based on evolutionary models"/>
</dbReference>
<dbReference type="PhylomeDB" id="Q8NHS9"/>
<dbReference type="TreeFam" id="TF332549"/>
<dbReference type="PathwayCommons" id="Q8NHS9"/>
<dbReference type="SignaLink" id="Q8NHS9"/>
<dbReference type="BioGRID-ORCS" id="84690">
    <property type="hits" value="13 hits in 1142 CRISPR screens"/>
</dbReference>
<dbReference type="ChiTaRS" id="SPATA22">
    <property type="organism name" value="human"/>
</dbReference>
<dbReference type="GenomeRNAi" id="84690"/>
<dbReference type="Pharos" id="Q8NHS9">
    <property type="development level" value="Tbio"/>
</dbReference>
<dbReference type="PRO" id="PR:Q8NHS9"/>
<dbReference type="Proteomes" id="UP000005640">
    <property type="component" value="Chromosome 17"/>
</dbReference>
<dbReference type="RNAct" id="Q8NHS9">
    <property type="molecule type" value="protein"/>
</dbReference>
<dbReference type="Bgee" id="ENSG00000141255">
    <property type="expression patterns" value="Expressed in sperm and 103 other cell types or tissues"/>
</dbReference>
<dbReference type="ExpressionAtlas" id="Q8NHS9">
    <property type="expression patterns" value="baseline and differential"/>
</dbReference>
<dbReference type="GO" id="GO:0005694">
    <property type="term" value="C:chromosome"/>
    <property type="evidence" value="ECO:0000250"/>
    <property type="project" value="UniProtKB"/>
</dbReference>
<dbReference type="GO" id="GO:0009566">
    <property type="term" value="P:fertilization"/>
    <property type="evidence" value="ECO:0007669"/>
    <property type="project" value="Ensembl"/>
</dbReference>
<dbReference type="GO" id="GO:0007129">
    <property type="term" value="P:homologous chromosome pairing at meiosis"/>
    <property type="evidence" value="ECO:0007669"/>
    <property type="project" value="Ensembl"/>
</dbReference>
<dbReference type="GO" id="GO:0000711">
    <property type="term" value="P:meiotic DNA repair synthesis"/>
    <property type="evidence" value="ECO:0007669"/>
    <property type="project" value="Ensembl"/>
</dbReference>
<dbReference type="GO" id="GO:0051445">
    <property type="term" value="P:regulation of meiotic cell cycle"/>
    <property type="evidence" value="ECO:0000318"/>
    <property type="project" value="GO_Central"/>
</dbReference>
<dbReference type="GO" id="GO:0061458">
    <property type="term" value="P:reproductive system development"/>
    <property type="evidence" value="ECO:0007669"/>
    <property type="project" value="Ensembl"/>
</dbReference>
<dbReference type="GO" id="GO:0048137">
    <property type="term" value="P:spermatocyte division"/>
    <property type="evidence" value="ECO:0007669"/>
    <property type="project" value="Ensembl"/>
</dbReference>
<dbReference type="InterPro" id="IPR033536">
    <property type="entry name" value="Spata22"/>
</dbReference>
<dbReference type="PANTHER" id="PTHR35258">
    <property type="entry name" value="SPERMATOGENESIS-ASSOCIATED PROTEIN 22"/>
    <property type="match status" value="1"/>
</dbReference>
<dbReference type="PANTHER" id="PTHR35258:SF1">
    <property type="entry name" value="SPERMATOGENESIS-ASSOCIATED PROTEIN 22"/>
    <property type="match status" value="1"/>
</dbReference>
<organism>
    <name type="scientific">Homo sapiens</name>
    <name type="common">Human</name>
    <dbReference type="NCBI Taxonomy" id="9606"/>
    <lineage>
        <taxon>Eukaryota</taxon>
        <taxon>Metazoa</taxon>
        <taxon>Chordata</taxon>
        <taxon>Craniata</taxon>
        <taxon>Vertebrata</taxon>
        <taxon>Euteleostomi</taxon>
        <taxon>Mammalia</taxon>
        <taxon>Eutheria</taxon>
        <taxon>Euarchontoglires</taxon>
        <taxon>Primates</taxon>
        <taxon>Haplorrhini</taxon>
        <taxon>Catarrhini</taxon>
        <taxon>Hominidae</taxon>
        <taxon>Homo</taxon>
    </lineage>
</organism>
<sequence length="363" mass="41318">MKRSLNENSARSTAGCLPVPLFNQKKRNRQPLTSNPLKDDSGISTPSDNYDFPPLPTDWAWEAVNPELAPVMKTVDTGQIPHSVSRPLRSQDSVFNSIQSNTGRSQGGWSYRDGNKNTSLKTWNKNDFKPQCKRTNLVANDGKNSCPVSSGAQQQKQLRIPEPPNLSRNKETELLRQTHSSKISGCTMRGLDKNSALQTLKPNFQQNQYKKQMLDDIPEDNTLKETSLYQLQFKEKASSLRIISAVIESMKYWREHAQKTVLLFEVLAVLDSAVTPGPYYSKTFLMRDGKNTLPCVFYEIDRELPRLIRGRVHRCVGNYDQKKNIFQCVSVRPASVSEQKTFQAFVKIADVEMQYYINVMNET</sequence>
<protein>
    <recommendedName>
        <fullName evidence="9">Spermatogenesis-associated protein 22</fullName>
    </recommendedName>
    <alternativeName>
        <fullName>Testis development protein NYD-SP20</fullName>
    </alternativeName>
</protein>
<name>SPT22_HUMAN</name>